<protein>
    <recommendedName>
        <fullName>Tir chaperone</fullName>
    </recommendedName>
</protein>
<comment type="function">
    <text evidence="1">Chaperone for the type III secretion of Tir. Probably stabilizes the protein, prevents inappropriate protein-proteininteractions and aids in secretion (By similarity).</text>
</comment>
<comment type="subcellular location">
    <subcellularLocation>
        <location evidence="1">Cytoplasm</location>
    </subcellularLocation>
</comment>
<comment type="similarity">
    <text evidence="2">Belongs to the CesT/SycH chaperone family.</text>
</comment>
<reference key="1">
    <citation type="journal article" date="1993" name="Infect. Immun.">
        <title>Attaching and effacing locus of a Citrobacter freundii biotype that causes transmissible murine colonic hyperplasia.</title>
        <authorList>
            <person name="Schauer D.B."/>
            <person name="Falkow S."/>
        </authorList>
    </citation>
    <scope>NUCLEOTIDE SEQUENCE [GENOMIC DNA]</scope>
</reference>
<dbReference type="EMBL" id="L11691">
    <property type="protein sequence ID" value="AAA23096.1"/>
    <property type="molecule type" value="Genomic_DNA"/>
</dbReference>
<dbReference type="PIR" id="I40704">
    <property type="entry name" value="I40704"/>
</dbReference>
<dbReference type="SMR" id="Q07601"/>
<dbReference type="GO" id="GO:0005737">
    <property type="term" value="C:cytoplasm"/>
    <property type="evidence" value="ECO:0007669"/>
    <property type="project" value="UniProtKB-SubCell"/>
</dbReference>
<dbReference type="GO" id="GO:0030254">
    <property type="term" value="P:protein secretion by the type III secretion system"/>
    <property type="evidence" value="ECO:0007669"/>
    <property type="project" value="InterPro"/>
</dbReference>
<dbReference type="CDD" id="cd17023">
    <property type="entry name" value="T3SC_IA_CesT-like"/>
    <property type="match status" value="1"/>
</dbReference>
<dbReference type="Gene3D" id="1.10.287.390">
    <property type="match status" value="1"/>
</dbReference>
<dbReference type="Gene3D" id="3.30.1460.10">
    <property type="match status" value="1"/>
</dbReference>
<dbReference type="InterPro" id="IPR010261">
    <property type="entry name" value="Tir_chaperone"/>
</dbReference>
<dbReference type="Pfam" id="PF05932">
    <property type="entry name" value="CesT"/>
    <property type="match status" value="1"/>
</dbReference>
<dbReference type="SUPFAM" id="SSF69635">
    <property type="entry name" value="Type III secretory system chaperone-like"/>
    <property type="match status" value="1"/>
</dbReference>
<sequence length="156" mass="17947">MSSRSELLLERFAEKIGIGTISFNENRLCSFVIDEIYYISLSDTNDEYMMIYGVCGKFPTDNPNFALEILNANLWFRENGGPYLCYESGAQSLLLALRFPLDDVTPEKLENEIEVVVKSMENLYLVLHNQGITLENEHMKIEEISSNDNKHYYAGR</sequence>
<organism>
    <name type="scientific">Citrobacter freundii</name>
    <dbReference type="NCBI Taxonomy" id="546"/>
    <lineage>
        <taxon>Bacteria</taxon>
        <taxon>Pseudomonadati</taxon>
        <taxon>Pseudomonadota</taxon>
        <taxon>Gammaproteobacteria</taxon>
        <taxon>Enterobacterales</taxon>
        <taxon>Enterobacteriaceae</taxon>
        <taxon>Citrobacter</taxon>
        <taxon>Citrobacter freundii complex</taxon>
    </lineage>
</organism>
<name>CEST_CITFR</name>
<proteinExistence type="inferred from homology"/>
<feature type="chain" id="PRO_0000216359" description="Tir chaperone">
    <location>
        <begin position="1"/>
        <end position="156"/>
    </location>
</feature>
<keyword id="KW-0143">Chaperone</keyword>
<keyword id="KW-0963">Cytoplasm</keyword>
<keyword id="KW-0843">Virulence</keyword>
<gene>
    <name type="primary">cesT</name>
</gene>
<evidence type="ECO:0000250" key="1"/>
<evidence type="ECO:0000305" key="2"/>
<accession>Q07601</accession>